<accession>P68100</accession>
<accession>P00010</accession>
<gene>
    <name type="primary">CYCS</name>
    <name type="synonym">CYC</name>
</gene>
<organism>
    <name type="scientific">Eschrichtius robustus</name>
    <name type="common">California gray whale</name>
    <name type="synonym">Eschrichtius gibbosus</name>
    <dbReference type="NCBI Taxonomy" id="9764"/>
    <lineage>
        <taxon>Eukaryota</taxon>
        <taxon>Metazoa</taxon>
        <taxon>Chordata</taxon>
        <taxon>Craniata</taxon>
        <taxon>Vertebrata</taxon>
        <taxon>Euteleostomi</taxon>
        <taxon>Mammalia</taxon>
        <taxon>Eutheria</taxon>
        <taxon>Laurasiatheria</taxon>
        <taxon>Artiodactyla</taxon>
        <taxon>Whippomorpha</taxon>
        <taxon>Cetacea</taxon>
        <taxon>Mysticeti</taxon>
        <taxon>Eschrichtiidae</taxon>
        <taxon>Eschrichtius</taxon>
    </lineage>
</organism>
<proteinExistence type="evidence at protein level"/>
<evidence type="ECO:0000250" key="1"/>
<evidence type="ECO:0000250" key="2">
    <source>
        <dbReference type="UniProtKB" id="P62894"/>
    </source>
</evidence>
<evidence type="ECO:0000250" key="3">
    <source>
        <dbReference type="UniProtKB" id="P62897"/>
    </source>
</evidence>
<evidence type="ECO:0000269" key="4">
    <source>
    </source>
</evidence>
<evidence type="ECO:0000305" key="5"/>
<sequence>MGDVEKGKKIFVQKCAQCHTVEKGGKHKTGPNLHGLFGRKTGQAVGFSYTDANKNKGITWGEETLMEYLENPKKYIPGTKMIFAGIKKKGERADLIAYLKKATNE</sequence>
<protein>
    <recommendedName>
        <fullName>Cytochrome c</fullName>
    </recommendedName>
</protein>
<comment type="function">
    <text>Electron carrier protein. The oxidized form of the cytochrome c heme group can accept an electron from the heme group of the cytochrome c1 subunit of cytochrome reductase. Cytochrome c then transfers this electron to the cytochrome oxidase complex, the final protein carrier in the mitochondrial electron-transport chain.</text>
</comment>
<comment type="function">
    <text evidence="1">Plays a role in apoptosis. Suppression of the anti-apoptotic members or activation of the pro-apoptotic members of the Bcl-2 family leads to altered mitochondrial membrane permeability resulting in release of cytochrome c into the cytosol. Binding of cytochrome c to Apaf-1 triggers the activation of caspase-9, which then accelerates apoptosis by activating other caspases (By similarity).</text>
</comment>
<comment type="subcellular location">
    <subcellularLocation>
        <location>Mitochondrion intermembrane space</location>
    </subcellularLocation>
    <text>Loosely associated with the inner membrane.</text>
</comment>
<comment type="PTM">
    <text>Binds 1 heme c group covalently per subunit.</text>
</comment>
<comment type="PTM">
    <text evidence="1">Phosphorylation at Tyr-49 and Tyr-98 both reduce by half the turnover in the reaction with cytochrome c oxidase, down-regulating mitochondrial respiration.</text>
</comment>
<comment type="similarity">
    <text evidence="5">Belongs to the cytochrome c family.</text>
</comment>
<comment type="online information" name="Protein Spotlight">
    <link uri="https://www.proteinspotlight.org/back_issues/076"/>
    <text>Life shuttle - Issue 76 of November 2006</text>
</comment>
<keyword id="KW-0007">Acetylation</keyword>
<keyword id="KW-0053">Apoptosis</keyword>
<keyword id="KW-0903">Direct protein sequencing</keyword>
<keyword id="KW-0249">Electron transport</keyword>
<keyword id="KW-0349">Heme</keyword>
<keyword id="KW-0408">Iron</keyword>
<keyword id="KW-0479">Metal-binding</keyword>
<keyword id="KW-0496">Mitochondrion</keyword>
<keyword id="KW-0597">Phosphoprotein</keyword>
<keyword id="KW-0679">Respiratory chain</keyword>
<keyword id="KW-0813">Transport</keyword>
<reference key="1">
    <citation type="journal article" date="1966" name="J. Biol. Chem.">
        <title>Amino acid sequence of whale heart cytochrome c.</title>
        <authorList>
            <person name="Goldstone A."/>
            <person name="Smith E.L."/>
        </authorList>
    </citation>
    <scope>PROTEIN SEQUENCE OF 2-105</scope>
    <scope>ACETYLATION AT GLY-2</scope>
    <source>
        <tissue>Heart</tissue>
    </source>
</reference>
<name>CYC_ESCRO</name>
<feature type="initiator methionine" description="Removed" evidence="4">
    <location>
        <position position="1"/>
    </location>
</feature>
<feature type="chain" id="PRO_0000108214" description="Cytochrome c">
    <location>
        <begin position="2"/>
        <end position="105"/>
    </location>
</feature>
<feature type="binding site" description="covalent">
    <location>
        <position position="15"/>
    </location>
    <ligand>
        <name>heme c</name>
        <dbReference type="ChEBI" id="CHEBI:61717"/>
    </ligand>
</feature>
<feature type="binding site" description="covalent">
    <location>
        <position position="18"/>
    </location>
    <ligand>
        <name>heme c</name>
        <dbReference type="ChEBI" id="CHEBI:61717"/>
    </ligand>
</feature>
<feature type="binding site" description="axial binding residue">
    <location>
        <position position="19"/>
    </location>
    <ligand>
        <name>heme c</name>
        <dbReference type="ChEBI" id="CHEBI:61717"/>
    </ligand>
    <ligandPart>
        <name>Fe</name>
        <dbReference type="ChEBI" id="CHEBI:18248"/>
    </ligandPart>
</feature>
<feature type="binding site" description="axial binding residue">
    <location>
        <position position="81"/>
    </location>
    <ligand>
        <name>heme c</name>
        <dbReference type="ChEBI" id="CHEBI:61717"/>
    </ligand>
    <ligandPart>
        <name>Fe</name>
        <dbReference type="ChEBI" id="CHEBI:18248"/>
    </ligandPart>
</feature>
<feature type="modified residue" description="N-acetylglycine" evidence="4">
    <location>
        <position position="2"/>
    </location>
</feature>
<feature type="modified residue" description="Phosphotyrosine" evidence="2">
    <location>
        <position position="49"/>
    </location>
</feature>
<feature type="modified residue" description="N6-succinyllysine" evidence="3">
    <location>
        <position position="56"/>
    </location>
</feature>
<feature type="modified residue" description="N6-acetyllysine; alternate" evidence="3">
    <location>
        <position position="73"/>
    </location>
</feature>
<feature type="modified residue" description="N6-succinyllysine; alternate" evidence="3">
    <location>
        <position position="73"/>
    </location>
</feature>
<feature type="modified residue" description="Phosphotyrosine" evidence="2">
    <location>
        <position position="98"/>
    </location>
</feature>
<feature type="modified residue" description="N6-acetyllysine" evidence="3">
    <location>
        <position position="100"/>
    </location>
</feature>
<dbReference type="PIR" id="A04606">
    <property type="entry name" value="CCWHC"/>
</dbReference>
<dbReference type="SMR" id="P68100"/>
<dbReference type="iPTMnet" id="P68100"/>
<dbReference type="GO" id="GO:0005758">
    <property type="term" value="C:mitochondrial intermembrane space"/>
    <property type="evidence" value="ECO:0007669"/>
    <property type="project" value="UniProtKB-SubCell"/>
</dbReference>
<dbReference type="GO" id="GO:0009055">
    <property type="term" value="F:electron transfer activity"/>
    <property type="evidence" value="ECO:0007669"/>
    <property type="project" value="InterPro"/>
</dbReference>
<dbReference type="GO" id="GO:0020037">
    <property type="term" value="F:heme binding"/>
    <property type="evidence" value="ECO:0007669"/>
    <property type="project" value="InterPro"/>
</dbReference>
<dbReference type="GO" id="GO:0046872">
    <property type="term" value="F:metal ion binding"/>
    <property type="evidence" value="ECO:0007669"/>
    <property type="project" value="UniProtKB-KW"/>
</dbReference>
<dbReference type="GO" id="GO:0006915">
    <property type="term" value="P:apoptotic process"/>
    <property type="evidence" value="ECO:0007669"/>
    <property type="project" value="UniProtKB-KW"/>
</dbReference>
<dbReference type="FunFam" id="1.10.760.10:FF:000008">
    <property type="entry name" value="Cytochrome c"/>
    <property type="match status" value="1"/>
</dbReference>
<dbReference type="Gene3D" id="1.10.760.10">
    <property type="entry name" value="Cytochrome c-like domain"/>
    <property type="match status" value="1"/>
</dbReference>
<dbReference type="InterPro" id="IPR009056">
    <property type="entry name" value="Cyt_c-like_dom"/>
</dbReference>
<dbReference type="InterPro" id="IPR036909">
    <property type="entry name" value="Cyt_c-like_dom_sf"/>
</dbReference>
<dbReference type="InterPro" id="IPR002327">
    <property type="entry name" value="Cyt_c_1A/1B"/>
</dbReference>
<dbReference type="PANTHER" id="PTHR11961">
    <property type="entry name" value="CYTOCHROME C"/>
    <property type="match status" value="1"/>
</dbReference>
<dbReference type="Pfam" id="PF00034">
    <property type="entry name" value="Cytochrom_C"/>
    <property type="match status" value="1"/>
</dbReference>
<dbReference type="PRINTS" id="PR00604">
    <property type="entry name" value="CYTCHRMECIAB"/>
</dbReference>
<dbReference type="SUPFAM" id="SSF46626">
    <property type="entry name" value="Cytochrome c"/>
    <property type="match status" value="1"/>
</dbReference>
<dbReference type="PROSITE" id="PS51007">
    <property type="entry name" value="CYTC"/>
    <property type="match status" value="1"/>
</dbReference>